<reference key="1">
    <citation type="journal article" date="1990" name="Nature">
        <title>Cerebellar GABAA receptor selective for a behavioural alcohol antagonist.</title>
        <authorList>
            <person name="Lueddens H."/>
            <person name="Pritchett D."/>
            <person name="Khler M."/>
            <person name="Killisch I."/>
            <person name="Keinaenen K."/>
            <person name="Monyer H."/>
            <person name="Sprengel R."/>
            <person name="Seeburg P.H."/>
        </authorList>
    </citation>
    <scope>NUCLEOTIDE SEQUENCE [GENOMIC DNA]</scope>
    <scope>FUNCTION</scope>
    <scope>TISSUE SPECIFICITY</scope>
    <source>
        <tissue>Brain</tissue>
    </source>
</reference>
<reference key="2">
    <citation type="journal article" date="1998" name="J. Neurosci.">
        <title>Segregation of different GABAA receptors to synaptic and extrasynaptic membranes of cerebellar granule cells.</title>
        <authorList>
            <person name="Nusser Z."/>
            <person name="Sieghart W."/>
            <person name="Somogyi P."/>
        </authorList>
    </citation>
    <scope>FUNCTION</scope>
    <scope>SUBCELLULAR LOCATION</scope>
    <scope>TISSUE SPECIFICITY</scope>
</reference>
<reference key="3">
    <citation type="journal article" date="2012" name="Nat. Commun.">
        <title>Quantitative maps of protein phosphorylation sites across 14 different rat organs and tissues.</title>
        <authorList>
            <person name="Lundby A."/>
            <person name="Secher A."/>
            <person name="Lage K."/>
            <person name="Nordsborg N.B."/>
            <person name="Dmytriyev A."/>
            <person name="Lundby C."/>
            <person name="Olsen J.V."/>
        </authorList>
    </citation>
    <scope>PHOSPHORYLATION [LARGE SCALE ANALYSIS] AT THR-403</scope>
    <scope>IDENTIFICATION BY MASS SPECTROMETRY [LARGE SCALE ANALYSIS]</scope>
</reference>
<name>GBRA6_RAT</name>
<organism>
    <name type="scientific">Rattus norvegicus</name>
    <name type="common">Rat</name>
    <dbReference type="NCBI Taxonomy" id="10116"/>
    <lineage>
        <taxon>Eukaryota</taxon>
        <taxon>Metazoa</taxon>
        <taxon>Chordata</taxon>
        <taxon>Craniata</taxon>
        <taxon>Vertebrata</taxon>
        <taxon>Euteleostomi</taxon>
        <taxon>Mammalia</taxon>
        <taxon>Eutheria</taxon>
        <taxon>Euarchontoglires</taxon>
        <taxon>Glires</taxon>
        <taxon>Rodentia</taxon>
        <taxon>Myomorpha</taxon>
        <taxon>Muroidea</taxon>
        <taxon>Muridae</taxon>
        <taxon>Murinae</taxon>
        <taxon>Rattus</taxon>
    </lineage>
</organism>
<protein>
    <recommendedName>
        <fullName>Gamma-aminobutyric acid receptor subunit alpha-6</fullName>
    </recommendedName>
    <alternativeName>
        <fullName>GABA(A) receptor subunit alpha-6</fullName>
        <shortName>GABAAR subunit alpha-6</shortName>
    </alternativeName>
</protein>
<keyword id="KW-1003">Cell membrane</keyword>
<keyword id="KW-0868">Chloride</keyword>
<keyword id="KW-0869">Chloride channel</keyword>
<keyword id="KW-1015">Disulfide bond</keyword>
<keyword id="KW-0325">Glycoprotein</keyword>
<keyword id="KW-0407">Ion channel</keyword>
<keyword id="KW-0406">Ion transport</keyword>
<keyword id="KW-1071">Ligand-gated ion channel</keyword>
<keyword id="KW-0472">Membrane</keyword>
<keyword id="KW-0597">Phosphoprotein</keyword>
<keyword id="KW-0628">Postsynaptic cell membrane</keyword>
<keyword id="KW-0675">Receptor</keyword>
<keyword id="KW-1185">Reference proteome</keyword>
<keyword id="KW-0732">Signal</keyword>
<keyword id="KW-0770">Synapse</keyword>
<keyword id="KW-0812">Transmembrane</keyword>
<keyword id="KW-1133">Transmembrane helix</keyword>
<keyword id="KW-0813">Transport</keyword>
<evidence type="ECO:0000250" key="1">
    <source>
        <dbReference type="UniProtKB" id="P08219"/>
    </source>
</evidence>
<evidence type="ECO:0000250" key="2">
    <source>
        <dbReference type="UniProtKB" id="P14867"/>
    </source>
</evidence>
<evidence type="ECO:0000250" key="3">
    <source>
        <dbReference type="UniProtKB" id="P16305"/>
    </source>
</evidence>
<evidence type="ECO:0000250" key="4">
    <source>
        <dbReference type="UniProtKB" id="P28472"/>
    </source>
</evidence>
<evidence type="ECO:0000250" key="5">
    <source>
        <dbReference type="UniProtKB" id="P62813"/>
    </source>
</evidence>
<evidence type="ECO:0000255" key="6"/>
<evidence type="ECO:0000269" key="7">
    <source>
    </source>
</evidence>
<evidence type="ECO:0000269" key="8">
    <source>
    </source>
</evidence>
<evidence type="ECO:0000305" key="9"/>
<evidence type="ECO:0000312" key="10">
    <source>
        <dbReference type="RGD" id="61861"/>
    </source>
</evidence>
<evidence type="ECO:0007744" key="11">
    <source>
    </source>
</evidence>
<proteinExistence type="evidence at protein level"/>
<accession>P30191</accession>
<gene>
    <name evidence="10" type="primary">Gabra6</name>
    <name type="synonym">Gabra-6</name>
</gene>
<comment type="function">
    <text evidence="1 2 7 8">Alpha subunit of the heteropentameric ligand-gated chloride channel gated by gamma-aminobutyric acid (GABA), a major inhibitory neurotransmitter in the brain (PubMed:2166916, PubMed:9464994). GABA-gated chloride channels, also named GABA(A) receptors (GABAAR), consist of five subunits arranged around a central pore and contain GABA active binding site(s) located at the alpha and beta subunit interface(s) (By similarity). When activated by GABA, GABAARs selectively allow the flow of chloride anions across the cell membrane down their electrochemical gradient (By similarity). Alpha-6/GABRA6 subunits are found at both synaptic and extrasynaptic sites (PubMed:2166916, PubMed:9464994). Chloride influx into the postsynaptic neuron following GABAAR opening decreases the neuron ability to generate a new action potential, thereby reducing nerve transmission (By similarity). Extrasynaptic alpha-6-containing receptors contribute to the tonic GABAergic inhibition (PubMed:9464994). Alpha-6 subunits are also present on glutamatergic synapses (PubMed:9464994).</text>
</comment>
<comment type="catalytic activity">
    <reaction evidence="1">
        <text>chloride(in) = chloride(out)</text>
        <dbReference type="Rhea" id="RHEA:29823"/>
        <dbReference type="ChEBI" id="CHEBI:17996"/>
    </reaction>
</comment>
<comment type="subunit">
    <text evidence="2 3">Heteropentamer, formed by a combination of alpha (GABRA1-6), beta (GABRB1-3), gamma (GABRG1-3), delta (GABRD), epsilon (GABRE), rho (GABRR1-3), pi (GABRP) and theta (GABRQ) chains, each subunit exhibiting distinct physiological and pharmacological properties (By similarity). Binds UBQLN1 (By similarity).</text>
</comment>
<comment type="subcellular location">
    <subcellularLocation>
        <location evidence="8">Postsynaptic cell membrane</location>
        <topology evidence="6">Multi-pass membrane protein</topology>
    </subcellularLocation>
    <subcellularLocation>
        <location evidence="8">Cell membrane</location>
        <topology evidence="6">Multi-pass membrane protein</topology>
    </subcellularLocation>
    <text evidence="8">Present in Golgi synapses, on the extrasynaptic membranes, and in some of the mossy fiber to granule cell synapses (PubMed:9464994). Also found on the extrasynaptic somatic and dendritic membranes (PubMed:9464994).</text>
</comment>
<comment type="tissue specificity">
    <text evidence="7 8">Expressed in brain, in cerebellar granule cells.</text>
</comment>
<comment type="domain">
    <text evidence="2">GABAARs subunits share a common topological structure: a peptide sequence made up of a long extracellular N-terminal, four transmembrane domains, intracellular or cytoplasmic domain located between the third and the fourth transmembrane domains.</text>
</comment>
<comment type="similarity">
    <text evidence="9">Belongs to the ligand-gated ion channel (TC 1.A.9) family. Gamma-aminobutyric acid receptor (TC 1.A.9.5) subfamily. GABRA6 sub-subfamily.</text>
</comment>
<feature type="signal peptide" evidence="6">
    <location>
        <begin position="1"/>
        <end position="19"/>
    </location>
</feature>
<feature type="chain" id="PRO_0000000449" description="Gamma-aminobutyric acid receptor subunit alpha-6">
    <location>
        <begin position="20"/>
        <end position="453"/>
    </location>
</feature>
<feature type="topological domain" description="Extracellular" evidence="9">
    <location>
        <begin position="20"/>
        <end position="243"/>
    </location>
</feature>
<feature type="transmembrane region" description="Helical" evidence="6">
    <location>
        <begin position="244"/>
        <end position="264"/>
    </location>
</feature>
<feature type="topological domain" description="Cytoplasmic" evidence="9">
    <location>
        <begin position="265"/>
        <end position="270"/>
    </location>
</feature>
<feature type="transmembrane region" description="Helical" evidence="6">
    <location>
        <begin position="271"/>
        <end position="290"/>
    </location>
</feature>
<feature type="topological domain" description="Extracellular" evidence="9">
    <location>
        <begin position="291"/>
        <end position="304"/>
    </location>
</feature>
<feature type="transmembrane region" description="Helical" evidence="6">
    <location>
        <begin position="305"/>
        <end position="325"/>
    </location>
</feature>
<feature type="topological domain" description="Cytoplasmic" evidence="9">
    <location>
        <begin position="326"/>
        <end position="422"/>
    </location>
</feature>
<feature type="transmembrane region" description="Helical" evidence="6">
    <location>
        <begin position="423"/>
        <end position="443"/>
    </location>
</feature>
<feature type="topological domain" description="Extracellular" evidence="9">
    <location>
        <begin position="444"/>
        <end position="453"/>
    </location>
</feature>
<feature type="binding site" evidence="2">
    <location>
        <position position="84"/>
    </location>
    <ligand>
        <name>4-aminobutanoate</name>
        <dbReference type="ChEBI" id="CHEBI:59888"/>
        <note>ligand shared with the neighboring beta subunit</note>
    </ligand>
</feature>
<feature type="binding site" evidence="5">
    <location>
        <position position="147"/>
    </location>
    <ligand>
        <name>4-aminobutanoate</name>
        <dbReference type="ChEBI" id="CHEBI:59888"/>
        <note>ligand shared with the neighboring beta subunit</note>
    </ligand>
</feature>
<feature type="modified residue" description="Phosphoserine" evidence="3">
    <location>
        <position position="375"/>
    </location>
</feature>
<feature type="modified residue" description="Phosphothreonine" evidence="11">
    <location>
        <position position="403"/>
    </location>
</feature>
<feature type="glycosylation site" description="N-linked (GlcNAc...) asparagine" evidence="6">
    <location>
        <position position="31"/>
    </location>
</feature>
<feature type="glycosylation site" description="N-linked (GlcNAc...) asparagine" evidence="6">
    <location>
        <position position="128"/>
    </location>
</feature>
<feature type="glycosylation site" description="N-linked (GlcNAc...) asparagine" evidence="6">
    <location>
        <position position="141"/>
    </location>
</feature>
<feature type="disulfide bond" evidence="4">
    <location>
        <begin position="156"/>
        <end position="170"/>
    </location>
</feature>
<dbReference type="EMBL" id="L08495">
    <property type="protein sequence ID" value="AAC42034.1"/>
    <property type="molecule type" value="Genomic_DNA"/>
</dbReference>
<dbReference type="EMBL" id="X55742">
    <property type="protein sequence ID" value="CAA39273.1"/>
    <property type="molecule type" value="Genomic_DNA"/>
</dbReference>
<dbReference type="PIR" id="S11087">
    <property type="entry name" value="S11087"/>
</dbReference>
<dbReference type="RefSeq" id="NP_068613.1">
    <property type="nucleotide sequence ID" value="NM_021841.1"/>
</dbReference>
<dbReference type="SMR" id="P30191"/>
<dbReference type="ComplexPortal" id="CPX-405">
    <property type="entry name" value="GABA-A receptor, alpha6-beta3-gamma2"/>
</dbReference>
<dbReference type="ComplexPortal" id="CPX-406">
    <property type="entry name" value="GABA-A receptor, alpha6-beta3-delta"/>
</dbReference>
<dbReference type="ComplexPortal" id="CPX-407">
    <property type="entry name" value="GABA-A receptor, alpha6-beta2-delta"/>
</dbReference>
<dbReference type="CORUM" id="P30191"/>
<dbReference type="FunCoup" id="P30191">
    <property type="interactions" value="374"/>
</dbReference>
<dbReference type="STRING" id="10116.ENSRNOP00000004877"/>
<dbReference type="BindingDB" id="P30191"/>
<dbReference type="ChEMBL" id="CHEMBL293"/>
<dbReference type="DrugCentral" id="P30191"/>
<dbReference type="GlyCosmos" id="P30191">
    <property type="glycosylation" value="3 sites, No reported glycans"/>
</dbReference>
<dbReference type="GlyGen" id="P30191">
    <property type="glycosylation" value="4 sites"/>
</dbReference>
<dbReference type="iPTMnet" id="P30191"/>
<dbReference type="PhosphoSitePlus" id="P30191"/>
<dbReference type="PaxDb" id="10116-ENSRNOP00000004877"/>
<dbReference type="ABCD" id="P30191">
    <property type="antibodies" value="2 sequenced antibodies"/>
</dbReference>
<dbReference type="GeneID" id="29708"/>
<dbReference type="KEGG" id="rno:29708"/>
<dbReference type="UCSC" id="RGD:61861">
    <property type="organism name" value="rat"/>
</dbReference>
<dbReference type="AGR" id="RGD:61861"/>
<dbReference type="CTD" id="2559"/>
<dbReference type="RGD" id="61861">
    <property type="gene designation" value="Gabra6"/>
</dbReference>
<dbReference type="eggNOG" id="KOG3642">
    <property type="taxonomic scope" value="Eukaryota"/>
</dbReference>
<dbReference type="InParanoid" id="P30191"/>
<dbReference type="PhylomeDB" id="P30191"/>
<dbReference type="Reactome" id="R-RNO-977443">
    <property type="pathway name" value="GABA receptor activation"/>
</dbReference>
<dbReference type="PRO" id="PR:P30191"/>
<dbReference type="Proteomes" id="UP000002494">
    <property type="component" value="Unplaced"/>
</dbReference>
<dbReference type="GO" id="GO:0099192">
    <property type="term" value="C:cerebellar Golgi cell to granule cell synapse"/>
    <property type="evidence" value="ECO:0000314"/>
    <property type="project" value="SynGO"/>
</dbReference>
<dbReference type="GO" id="GO:0034707">
    <property type="term" value="C:chloride channel complex"/>
    <property type="evidence" value="ECO:0007669"/>
    <property type="project" value="UniProtKB-KW"/>
</dbReference>
<dbReference type="GO" id="GO:0030425">
    <property type="term" value="C:dendrite"/>
    <property type="evidence" value="ECO:0000314"/>
    <property type="project" value="RGD"/>
</dbReference>
<dbReference type="GO" id="GO:0032590">
    <property type="term" value="C:dendrite membrane"/>
    <property type="evidence" value="ECO:0000318"/>
    <property type="project" value="GO_Central"/>
</dbReference>
<dbReference type="GO" id="GO:1902711">
    <property type="term" value="C:GABA-A receptor complex"/>
    <property type="evidence" value="ECO:0000250"/>
    <property type="project" value="ComplexPortal"/>
</dbReference>
<dbReference type="GO" id="GO:0098982">
    <property type="term" value="C:GABA-ergic synapse"/>
    <property type="evidence" value="ECO:0000314"/>
    <property type="project" value="SynGO"/>
</dbReference>
<dbReference type="GO" id="GO:0098686">
    <property type="term" value="C:hippocampal mossy fiber to CA3 synapse"/>
    <property type="evidence" value="ECO:0000314"/>
    <property type="project" value="SynGO"/>
</dbReference>
<dbReference type="GO" id="GO:0032809">
    <property type="term" value="C:neuronal cell body membrane"/>
    <property type="evidence" value="ECO:0000314"/>
    <property type="project" value="RGD"/>
</dbReference>
<dbReference type="GO" id="GO:0005886">
    <property type="term" value="C:plasma membrane"/>
    <property type="evidence" value="ECO:0000314"/>
    <property type="project" value="UniProtKB"/>
</dbReference>
<dbReference type="GO" id="GO:0098794">
    <property type="term" value="C:postsynapse"/>
    <property type="evidence" value="ECO:0000318"/>
    <property type="project" value="GO_Central"/>
</dbReference>
<dbReference type="GO" id="GO:0045211">
    <property type="term" value="C:postsynaptic membrane"/>
    <property type="evidence" value="ECO:0000314"/>
    <property type="project" value="RGD"/>
</dbReference>
<dbReference type="GO" id="GO:0099634">
    <property type="term" value="C:postsynaptic specialization membrane"/>
    <property type="evidence" value="ECO:0000314"/>
    <property type="project" value="UniProtKB"/>
</dbReference>
<dbReference type="GO" id="GO:0042734">
    <property type="term" value="C:presynaptic membrane"/>
    <property type="evidence" value="ECO:0000314"/>
    <property type="project" value="RGD"/>
</dbReference>
<dbReference type="GO" id="GO:0043235">
    <property type="term" value="C:receptor complex"/>
    <property type="evidence" value="ECO:0000314"/>
    <property type="project" value="RGD"/>
</dbReference>
<dbReference type="GO" id="GO:0005254">
    <property type="term" value="F:chloride channel activity"/>
    <property type="evidence" value="ECO:0007669"/>
    <property type="project" value="UniProtKB-KW"/>
</dbReference>
<dbReference type="GO" id="GO:0050809">
    <property type="term" value="F:diazepam binding"/>
    <property type="evidence" value="ECO:0000314"/>
    <property type="project" value="RGD"/>
</dbReference>
<dbReference type="GO" id="GO:0004890">
    <property type="term" value="F:GABA-A receptor activity"/>
    <property type="evidence" value="ECO:0007669"/>
    <property type="project" value="InterPro"/>
</dbReference>
<dbReference type="GO" id="GO:1901363">
    <property type="term" value="F:heterocyclic compound binding"/>
    <property type="evidence" value="ECO:0000314"/>
    <property type="project" value="RGD"/>
</dbReference>
<dbReference type="GO" id="GO:0005237">
    <property type="term" value="F:inhibitory extracellular ligand-gated monoatomic ion channel activity"/>
    <property type="evidence" value="ECO:0000315"/>
    <property type="project" value="RGD"/>
</dbReference>
<dbReference type="GO" id="GO:0044877">
    <property type="term" value="F:protein-containing complex binding"/>
    <property type="evidence" value="ECO:0000353"/>
    <property type="project" value="RGD"/>
</dbReference>
<dbReference type="GO" id="GO:1904315">
    <property type="term" value="F:transmitter-gated monoatomic ion channel activity involved in regulation of postsynaptic membrane potential"/>
    <property type="evidence" value="ECO:0000266"/>
    <property type="project" value="RGD"/>
</dbReference>
<dbReference type="GO" id="GO:1902476">
    <property type="term" value="P:chloride transmembrane transport"/>
    <property type="evidence" value="ECO:0000318"/>
    <property type="project" value="GO_Central"/>
</dbReference>
<dbReference type="GO" id="GO:0007214">
    <property type="term" value="P:gamma-aminobutyric acid signaling pathway"/>
    <property type="evidence" value="ECO:0000318"/>
    <property type="project" value="GO_Central"/>
</dbReference>
<dbReference type="GO" id="GO:1904862">
    <property type="term" value="P:inhibitory synapse assembly"/>
    <property type="evidence" value="ECO:0000318"/>
    <property type="project" value="GO_Central"/>
</dbReference>
<dbReference type="GO" id="GO:0045471">
    <property type="term" value="P:response to ethanol"/>
    <property type="evidence" value="ECO:0000270"/>
    <property type="project" value="RGD"/>
</dbReference>
<dbReference type="GO" id="GO:0051932">
    <property type="term" value="P:synaptic transmission, GABAergic"/>
    <property type="evidence" value="ECO:0000315"/>
    <property type="project" value="RGD"/>
</dbReference>
<dbReference type="CDD" id="cd19052">
    <property type="entry name" value="LGIC_TM_GABAAR_alpha"/>
    <property type="match status" value="1"/>
</dbReference>
<dbReference type="FunFam" id="2.70.170.10:FF:000001">
    <property type="entry name" value="Gamma-aminobutyric acid A receptor subunit alpha-2"/>
    <property type="match status" value="1"/>
</dbReference>
<dbReference type="FunFam" id="1.20.58.390:FF:000002">
    <property type="entry name" value="Putative gamma-aminobutyric acid receptor subunit alpha-5"/>
    <property type="match status" value="1"/>
</dbReference>
<dbReference type="Gene3D" id="2.70.170.10">
    <property type="entry name" value="Neurotransmitter-gated ion-channel ligand-binding domain"/>
    <property type="match status" value="1"/>
</dbReference>
<dbReference type="Gene3D" id="1.20.58.390">
    <property type="entry name" value="Neurotransmitter-gated ion-channel transmembrane domain"/>
    <property type="match status" value="1"/>
</dbReference>
<dbReference type="InterPro" id="IPR006028">
    <property type="entry name" value="GABAA/Glycine_rcpt"/>
</dbReference>
<dbReference type="InterPro" id="IPR001390">
    <property type="entry name" value="GABAAa_rcpt"/>
</dbReference>
<dbReference type="InterPro" id="IPR005436">
    <property type="entry name" value="GABBAa6_rcpt"/>
</dbReference>
<dbReference type="InterPro" id="IPR047024">
    <property type="entry name" value="Gabra-1-6_TM"/>
</dbReference>
<dbReference type="InterPro" id="IPR006202">
    <property type="entry name" value="Neur_chan_lig-bd"/>
</dbReference>
<dbReference type="InterPro" id="IPR036734">
    <property type="entry name" value="Neur_chan_lig-bd_sf"/>
</dbReference>
<dbReference type="InterPro" id="IPR006201">
    <property type="entry name" value="Neur_channel"/>
</dbReference>
<dbReference type="InterPro" id="IPR036719">
    <property type="entry name" value="Neuro-gated_channel_TM_sf"/>
</dbReference>
<dbReference type="InterPro" id="IPR038050">
    <property type="entry name" value="Neuro_actylchol_rec"/>
</dbReference>
<dbReference type="InterPro" id="IPR006029">
    <property type="entry name" value="Neurotrans-gated_channel_TM"/>
</dbReference>
<dbReference type="InterPro" id="IPR018000">
    <property type="entry name" value="Neurotransmitter_ion_chnl_CS"/>
</dbReference>
<dbReference type="NCBIfam" id="TIGR00860">
    <property type="entry name" value="LIC"/>
    <property type="match status" value="1"/>
</dbReference>
<dbReference type="PANTHER" id="PTHR18945">
    <property type="entry name" value="NEUROTRANSMITTER GATED ION CHANNEL"/>
    <property type="match status" value="1"/>
</dbReference>
<dbReference type="Pfam" id="PF02931">
    <property type="entry name" value="Neur_chan_LBD"/>
    <property type="match status" value="1"/>
</dbReference>
<dbReference type="Pfam" id="PF02932">
    <property type="entry name" value="Neur_chan_memb"/>
    <property type="match status" value="1"/>
</dbReference>
<dbReference type="PRINTS" id="PR01079">
    <property type="entry name" value="GABAARALPHA"/>
</dbReference>
<dbReference type="PRINTS" id="PR01619">
    <property type="entry name" value="GABAARALPHA6"/>
</dbReference>
<dbReference type="PRINTS" id="PR00253">
    <property type="entry name" value="GABAARECEPTR"/>
</dbReference>
<dbReference type="PRINTS" id="PR00252">
    <property type="entry name" value="NRIONCHANNEL"/>
</dbReference>
<dbReference type="SUPFAM" id="SSF90112">
    <property type="entry name" value="Neurotransmitter-gated ion-channel transmembrane pore"/>
    <property type="match status" value="1"/>
</dbReference>
<dbReference type="SUPFAM" id="SSF63712">
    <property type="entry name" value="Nicotinic receptor ligand binding domain-like"/>
    <property type="match status" value="1"/>
</dbReference>
<dbReference type="PROSITE" id="PS00236">
    <property type="entry name" value="NEUROTR_ION_CHANNEL"/>
    <property type="match status" value="1"/>
</dbReference>
<sequence>MLLLLPWLFSLLWIENAQAQLEDEGNFYSENVSRILDNLLEGYDNRLRPGFGGAVTEVKTDIYVTSFGPVSDVEMEYTMDVFFRQTWTDERLKFKGPAEILSLNNLMVSKIWTPDTFFRNGKKSIAHNMTTPNKLFRLMHNGTILYTMRLTINADCPMRLVNFPMDGHACPLKFGSYAYPKSEIIYTWKKGPLYSVEVPEESSSLLQYDLIGQTVSSETIKSNTGEYVIMTVYFHLQRKMGYFMIQIYTPCIMTVILSQVSFWINKESVPARTVFGITTVLTMTTLSISARHSLPKVSYATAMDWFIAVCFAFVFSALIEFAAVNYFTNLQSQKAERQAQTAAKPPVAKSKTTESLEAEIVVHSDSKYHLKKRISSLTLPIVPSSEASKVLSRTPILPSTPVTPPLLLPAIGGTSKIDQYSRILFPVAFAGFNLVYWIVYLSKDTMEVSSTVE</sequence>